<reference key="1">
    <citation type="journal article" date="2007" name="Nat. Biotechnol.">
        <title>Genome sequencing and analysis of the versatile cell factory Aspergillus niger CBS 513.88.</title>
        <authorList>
            <person name="Pel H.J."/>
            <person name="de Winde J.H."/>
            <person name="Archer D.B."/>
            <person name="Dyer P.S."/>
            <person name="Hofmann G."/>
            <person name="Schaap P.J."/>
            <person name="Turner G."/>
            <person name="de Vries R.P."/>
            <person name="Albang R."/>
            <person name="Albermann K."/>
            <person name="Andersen M.R."/>
            <person name="Bendtsen J.D."/>
            <person name="Benen J.A.E."/>
            <person name="van den Berg M."/>
            <person name="Breestraat S."/>
            <person name="Caddick M.X."/>
            <person name="Contreras R."/>
            <person name="Cornell M."/>
            <person name="Coutinho P.M."/>
            <person name="Danchin E.G.J."/>
            <person name="Debets A.J.M."/>
            <person name="Dekker P."/>
            <person name="van Dijck P.W.M."/>
            <person name="van Dijk A."/>
            <person name="Dijkhuizen L."/>
            <person name="Driessen A.J.M."/>
            <person name="d'Enfert C."/>
            <person name="Geysens S."/>
            <person name="Goosen C."/>
            <person name="Groot G.S.P."/>
            <person name="de Groot P.W.J."/>
            <person name="Guillemette T."/>
            <person name="Henrissat B."/>
            <person name="Herweijer M."/>
            <person name="van den Hombergh J.P.T.W."/>
            <person name="van den Hondel C.A.M.J.J."/>
            <person name="van der Heijden R.T.J.M."/>
            <person name="van der Kaaij R.M."/>
            <person name="Klis F.M."/>
            <person name="Kools H.J."/>
            <person name="Kubicek C.P."/>
            <person name="van Kuyk P.A."/>
            <person name="Lauber J."/>
            <person name="Lu X."/>
            <person name="van der Maarel M.J.E.C."/>
            <person name="Meulenberg R."/>
            <person name="Menke H."/>
            <person name="Mortimer M.A."/>
            <person name="Nielsen J."/>
            <person name="Oliver S.G."/>
            <person name="Olsthoorn M."/>
            <person name="Pal K."/>
            <person name="van Peij N.N.M.E."/>
            <person name="Ram A.F.J."/>
            <person name="Rinas U."/>
            <person name="Roubos J.A."/>
            <person name="Sagt C.M.J."/>
            <person name="Schmoll M."/>
            <person name="Sun J."/>
            <person name="Ussery D."/>
            <person name="Varga J."/>
            <person name="Vervecken W."/>
            <person name="van de Vondervoort P.J.J."/>
            <person name="Wedler H."/>
            <person name="Woesten H.A.B."/>
            <person name="Zeng A.-P."/>
            <person name="van Ooyen A.J.J."/>
            <person name="Visser J."/>
            <person name="Stam H."/>
        </authorList>
    </citation>
    <scope>NUCLEOTIDE SEQUENCE [LARGE SCALE GENOMIC DNA]</scope>
    <source>
        <strain>ATCC MYA-4892 / CBS 513.88 / FGSC A1513</strain>
    </source>
</reference>
<feature type="chain" id="PRO_0000317907" description="Autophagy-related protein 9">
    <location>
        <begin position="1"/>
        <end position="941"/>
    </location>
</feature>
<feature type="topological domain" description="Cytoplasmic" evidence="5">
    <location>
        <begin position="1"/>
        <end position="239"/>
    </location>
</feature>
<feature type="transmembrane region" description="Helical" evidence="3">
    <location>
        <begin position="240"/>
        <end position="260"/>
    </location>
</feature>
<feature type="topological domain" description="Lumenal" evidence="5">
    <location>
        <begin position="261"/>
        <end position="286"/>
    </location>
</feature>
<feature type="transmembrane region" description="Helical" evidence="3">
    <location>
        <begin position="287"/>
        <end position="307"/>
    </location>
</feature>
<feature type="topological domain" description="Cytoplasmic" evidence="5">
    <location>
        <begin position="308"/>
        <end position="455"/>
    </location>
</feature>
<feature type="intramembrane region" evidence="1">
    <location>
        <begin position="456"/>
        <end position="476"/>
    </location>
</feature>
<feature type="topological domain" description="Cytoplasmic" evidence="5">
    <location>
        <begin position="477"/>
        <end position="541"/>
    </location>
</feature>
<feature type="transmembrane region" description="Helical" evidence="3">
    <location>
        <begin position="542"/>
        <end position="562"/>
    </location>
</feature>
<feature type="topological domain" description="Lumenal" evidence="5">
    <location>
        <begin position="563"/>
        <end position="577"/>
    </location>
</feature>
<feature type="transmembrane region" description="Helical" evidence="3">
    <location>
        <begin position="578"/>
        <end position="598"/>
    </location>
</feature>
<feature type="topological domain" description="Cytoplasmic" evidence="5">
    <location>
        <begin position="599"/>
        <end position="644"/>
    </location>
</feature>
<feature type="intramembrane region" evidence="1">
    <location>
        <begin position="645"/>
        <end position="665"/>
    </location>
</feature>
<feature type="topological domain" description="Cytoplasmic" evidence="5">
    <location>
        <begin position="666"/>
        <end position="941"/>
    </location>
</feature>
<feature type="region of interest" description="Disordered" evidence="4">
    <location>
        <begin position="1"/>
        <end position="164"/>
    </location>
</feature>
<feature type="region of interest" description="Disordered" evidence="4">
    <location>
        <begin position="795"/>
        <end position="889"/>
    </location>
</feature>
<feature type="compositionally biased region" description="Basic and acidic residues" evidence="4">
    <location>
        <begin position="23"/>
        <end position="54"/>
    </location>
</feature>
<feature type="compositionally biased region" description="Pro residues" evidence="4">
    <location>
        <begin position="71"/>
        <end position="80"/>
    </location>
</feature>
<feature type="compositionally biased region" description="Basic residues" evidence="4">
    <location>
        <begin position="93"/>
        <end position="104"/>
    </location>
</feature>
<feature type="compositionally biased region" description="Pro residues" evidence="4">
    <location>
        <begin position="141"/>
        <end position="159"/>
    </location>
</feature>
<dbReference type="EMBL" id="AM270115">
    <property type="protein sequence ID" value="CAK47994.1"/>
    <property type="molecule type" value="Genomic_DNA"/>
</dbReference>
<dbReference type="SMR" id="A2QLJ9"/>
<dbReference type="EnsemblFungi" id="CAK47994">
    <property type="protein sequence ID" value="CAK47994"/>
    <property type="gene ID" value="An06g01500"/>
</dbReference>
<dbReference type="VEuPathDB" id="FungiDB:An06g01500"/>
<dbReference type="HOGENOM" id="CLU_006200_1_1_1"/>
<dbReference type="Proteomes" id="UP000006706">
    <property type="component" value="Chromosome 8ER"/>
</dbReference>
<dbReference type="GO" id="GO:0005776">
    <property type="term" value="C:autophagosome"/>
    <property type="evidence" value="ECO:0007669"/>
    <property type="project" value="TreeGrafter"/>
</dbReference>
<dbReference type="GO" id="GO:0030659">
    <property type="term" value="C:cytoplasmic vesicle membrane"/>
    <property type="evidence" value="ECO:0007669"/>
    <property type="project" value="UniProtKB-SubCell"/>
</dbReference>
<dbReference type="GO" id="GO:0005789">
    <property type="term" value="C:endoplasmic reticulum membrane"/>
    <property type="evidence" value="ECO:0007669"/>
    <property type="project" value="UniProtKB-SubCell"/>
</dbReference>
<dbReference type="GO" id="GO:0000139">
    <property type="term" value="C:Golgi membrane"/>
    <property type="evidence" value="ECO:0007669"/>
    <property type="project" value="UniProtKB-SubCell"/>
</dbReference>
<dbReference type="GO" id="GO:0005739">
    <property type="term" value="C:mitochondrion"/>
    <property type="evidence" value="ECO:0007669"/>
    <property type="project" value="EnsemblFungi"/>
</dbReference>
<dbReference type="GO" id="GO:0061908">
    <property type="term" value="C:phagophore"/>
    <property type="evidence" value="ECO:0007669"/>
    <property type="project" value="EnsemblFungi"/>
</dbReference>
<dbReference type="GO" id="GO:0034045">
    <property type="term" value="C:phagophore assembly site membrane"/>
    <property type="evidence" value="ECO:0007669"/>
    <property type="project" value="UniProtKB-SubCell"/>
</dbReference>
<dbReference type="GO" id="GO:0017128">
    <property type="term" value="F:phospholipid scramblase activity"/>
    <property type="evidence" value="ECO:0007669"/>
    <property type="project" value="EnsemblFungi"/>
</dbReference>
<dbReference type="GO" id="GO:0000423">
    <property type="term" value="P:mitophagy"/>
    <property type="evidence" value="ECO:0007669"/>
    <property type="project" value="EnsemblFungi"/>
</dbReference>
<dbReference type="GO" id="GO:0034727">
    <property type="term" value="P:piecemeal microautophagy of the nucleus"/>
    <property type="evidence" value="ECO:0007669"/>
    <property type="project" value="EnsemblFungi"/>
</dbReference>
<dbReference type="GO" id="GO:0034497">
    <property type="term" value="P:protein localization to phagophore assembly site"/>
    <property type="evidence" value="ECO:0007669"/>
    <property type="project" value="EnsemblFungi"/>
</dbReference>
<dbReference type="GO" id="GO:0061709">
    <property type="term" value="P:reticulophagy"/>
    <property type="evidence" value="ECO:0007669"/>
    <property type="project" value="EnsemblFungi"/>
</dbReference>
<dbReference type="InterPro" id="IPR007241">
    <property type="entry name" value="Autophagy-rel_prot_9"/>
</dbReference>
<dbReference type="PANTHER" id="PTHR13038">
    <property type="entry name" value="APG9 AUTOPHAGY 9"/>
    <property type="match status" value="1"/>
</dbReference>
<dbReference type="PANTHER" id="PTHR13038:SF10">
    <property type="entry name" value="AUTOPHAGY-RELATED PROTEIN 9"/>
    <property type="match status" value="1"/>
</dbReference>
<dbReference type="Pfam" id="PF04109">
    <property type="entry name" value="ATG9"/>
    <property type="match status" value="1"/>
</dbReference>
<proteinExistence type="inferred from homology"/>
<accession>A2QLJ9</accession>
<name>ATG9_ASPNC</name>
<comment type="function">
    <text evidence="2">Phospholipid scramblase involved in autophagy and cytoplasm to vacuole transport (Cvt) vesicle formation. Cycles between the preautophagosomal structure/phagophore assembly site (PAS) and the cytoplasmic vesicle pool and supplies membrane for the growing autophagosome. Lipid scramblase activity plays a key role in preautophagosomal structure/phagophore assembly by distributing the phospholipids that arrive through atg2 from the cytoplasmic to the luminal leaflet of the bilayer, thereby driving autophagosomal membrane expansion. Required for mitophagy. Also involved in endoplasmic reticulum-specific autophagic process and is essential for the survival of cells subjected to severe ER stress. Different machineries are required for anterograde trafficking to the PAS during either the Cvt pathway or bulk autophagy and for retrograde trafficking.</text>
</comment>
<comment type="catalytic activity">
    <reaction evidence="2">
        <text>a 1,2-diacyl-sn-glycero-3-phosphocholine(in) = a 1,2-diacyl-sn-glycero-3-phosphocholine(out)</text>
        <dbReference type="Rhea" id="RHEA:38571"/>
        <dbReference type="ChEBI" id="CHEBI:57643"/>
    </reaction>
</comment>
<comment type="catalytic activity">
    <reaction evidence="2">
        <text>a 1,2-diacyl-sn-glycero-3-phospho-L-serine(in) = a 1,2-diacyl-sn-glycero-3-phospho-L-serine(out)</text>
        <dbReference type="Rhea" id="RHEA:38663"/>
        <dbReference type="ChEBI" id="CHEBI:57262"/>
    </reaction>
</comment>
<comment type="catalytic activity">
    <reaction evidence="2">
        <text>a 1,2-diacyl-sn-glycero-3-phosphoethanolamine(in) = a 1,2-diacyl-sn-glycero-3-phosphoethanolamine(out)</text>
        <dbReference type="Rhea" id="RHEA:38895"/>
        <dbReference type="ChEBI" id="CHEBI:64612"/>
    </reaction>
</comment>
<comment type="catalytic activity">
    <reaction evidence="2">
        <text>a 1,2-diacyl-sn-glycero-3-phospho-(1D-myo-inositol-3-phosphate)(in) = a 1,2-diacyl-sn-glycero-3-phospho-(1D-myo-inositol-3-phosphate)(out)</text>
        <dbReference type="Rhea" id="RHEA:67920"/>
        <dbReference type="ChEBI" id="CHEBI:58088"/>
    </reaction>
</comment>
<comment type="subunit">
    <text evidence="1">Homotrimer; forms a homotrimer with a central pore that forms a path between the two membrane leaflets.</text>
</comment>
<comment type="subcellular location">
    <subcellularLocation>
        <location evidence="2">Preautophagosomal structure membrane</location>
        <topology evidence="2">Multi-pass membrane protein</topology>
    </subcellularLocation>
    <subcellularLocation>
        <location evidence="2">Cytoplasmic vesicle membrane</location>
        <topology evidence="2">Multi-pass membrane protein</topology>
    </subcellularLocation>
    <subcellularLocation>
        <location evidence="2">Golgi apparatus membrane</location>
        <topology evidence="2">Multi-pass membrane protein</topology>
    </subcellularLocation>
    <subcellularLocation>
        <location evidence="2">Endoplasmic reticulum membrane</location>
        <topology evidence="2">Multi-pass membrane protein</topology>
    </subcellularLocation>
</comment>
<comment type="domain">
    <text evidence="1">Forms a homotrimer with a solvated central pore, which is connected laterally to the cytosol through the cavity within each protomer. Acts as a lipid scramblase that uses its central pore to function: the central pore opens laterally to accommodate lipid headgroups, thereby enabling lipid flipping and redistribution of lipids added to the outer leaflet of atg9-containing vesicles, thereby enabling growth into autophagosomes.</text>
</comment>
<comment type="PTM">
    <text evidence="2">Phosphorylated by atg1. Atg1 phosphorylation is required for preautophagosome elongation.</text>
</comment>
<comment type="similarity">
    <text evidence="5">Belongs to the ATG9 family.</text>
</comment>
<keyword id="KW-0072">Autophagy</keyword>
<keyword id="KW-0968">Cytoplasmic vesicle</keyword>
<keyword id="KW-0256">Endoplasmic reticulum</keyword>
<keyword id="KW-0333">Golgi apparatus</keyword>
<keyword id="KW-0445">Lipid transport</keyword>
<keyword id="KW-0472">Membrane</keyword>
<keyword id="KW-0597">Phosphoprotein</keyword>
<keyword id="KW-1185">Reference proteome</keyword>
<keyword id="KW-0812">Transmembrane</keyword>
<keyword id="KW-1133">Transmembrane helix</keyword>
<keyword id="KW-0813">Transport</keyword>
<organism>
    <name type="scientific">Aspergillus niger (strain ATCC MYA-4892 / CBS 513.88 / FGSC A1513)</name>
    <dbReference type="NCBI Taxonomy" id="425011"/>
    <lineage>
        <taxon>Eukaryota</taxon>
        <taxon>Fungi</taxon>
        <taxon>Dikarya</taxon>
        <taxon>Ascomycota</taxon>
        <taxon>Pezizomycotina</taxon>
        <taxon>Eurotiomycetes</taxon>
        <taxon>Eurotiomycetidae</taxon>
        <taxon>Eurotiales</taxon>
        <taxon>Aspergillaceae</taxon>
        <taxon>Aspergillus</taxon>
        <taxon>Aspergillus subgen. Circumdati</taxon>
    </lineage>
</organism>
<sequence>MMTSNILSRFLPPNGSPSVYETIRQHDNHSDASDVEERAGMAFEDEHGDRFSDRELEDALADAGRDDSPGPSEPFLPRSPPTKRDEGGFLKAGSRRRKFSRSGRIHAASPRHKFDDSDDDVPPSLLVEGDQDDDDVLRSKLPPPPRSIDPPNVEPPPRPSPRDDRVHWEAARDRLPLHDTNRRAHHASLWSAGYPNLALVDPKEKALWMWANVENLDNFLKEVYTYFLGNGIWSILLNRVLSLLTFAFVVGFSIFLTNCIDYHKVRGSRTLDDILIQKCTKQMSMSATFLLWLLSFFWIGKAFQYLLDIRRLKHMHDFYHYLLGISDAEIQSISWQEVVSRLMTLRDSNPATAGAVSAKHRKFMGSQSKQRMDAHDIANRLMRKENYLIALINKDILDLTLPIPFLRNRQLFSRTLEWNINLCIMDYVFNEQGQVRTLFLKDTHRRALSEGLRRRFMFAGIMNIFVAPFIVVYFMMHYFFRYFNEYKKNPSQIGSRQYTPLAEWKFREFNELWHLFERRVNMSYPFASRYVDQFPKDKMVQFAGFVAFVSGALASVLALASVVDPELFLGFEITHDRTVLFYLGVFGSIWAVAQGLVPEETNVFDPEYALLEVINFTHYFPGHWKGRLHSDDVRKDFAVLYQMKIVIFLEEILSMIFTPFILWFSLPKCSDRLIDFFREFTVHVDGMGYLCSFAVFDFKKGTNVISQGDTGRRDAARQDLRADYFSTKDGKMLASYYGFLDNYGANPRSGHPSTKRQFHPPPTFPTLGSPSAIEMGNFGDRPAAAGLMGQQSTYGAAPRFGPAGMGDHLSPAPSMLLDPHHQPSASGFRSTHRANPYPRYRASRPPPTISDPIEDEDPPAGKGRSAVKSSPGVGSSGGGIGTSDSNLGESWRMNLVGDEVEEEDEGGENVDTLAGGGGVLGLIQQFQKVNQDNRGRTTVGI</sequence>
<protein>
    <recommendedName>
        <fullName>Autophagy-related protein 9</fullName>
    </recommendedName>
</protein>
<evidence type="ECO:0000250" key="1">
    <source>
        <dbReference type="UniProtKB" id="O74312"/>
    </source>
</evidence>
<evidence type="ECO:0000250" key="2">
    <source>
        <dbReference type="UniProtKB" id="Q12142"/>
    </source>
</evidence>
<evidence type="ECO:0000255" key="3"/>
<evidence type="ECO:0000256" key="4">
    <source>
        <dbReference type="SAM" id="MobiDB-lite"/>
    </source>
</evidence>
<evidence type="ECO:0000305" key="5"/>
<gene>
    <name type="primary">atg9</name>
    <name type="ORF">An06g01500</name>
</gene>